<proteinExistence type="evidence at transcript level"/>
<evidence type="ECO:0000250" key="1">
    <source>
        <dbReference type="UniProtKB" id="D3ZXS4"/>
    </source>
</evidence>
<evidence type="ECO:0000250" key="2">
    <source>
        <dbReference type="UniProtKB" id="Q96DD0"/>
    </source>
</evidence>
<evidence type="ECO:0000255" key="3"/>
<evidence type="ECO:0000305" key="4"/>
<accession>Q3ZC49</accession>
<sequence length="334" mass="38787">MSENVVSTGAVNAVKEVWEKRIKKLNEDLKREKEFQQKLVRIWEERVCLTKLREKVTKEDGRVILKIEKEEWKTLPSSLLKLNQLQEWQLHRIGLLKIPEFIGRFQNLIVLDLSRNTITEIPRGIGLLTRLQELILSYNRIKTVPMELSYCASLEKLELAVNRDISDLPQELSNLLKLTHLDLSMNLFTTIPPAVLNMPALEWLDMGSNRLEQLPDTIERMQNLHTLWLQRNEITCLPETISSMKNLSTLVLSNNKLQDIPVCMEKMTNLRFVNFRDNPLKLEVTLPPSENIEEEEERELFGLQFMHTYIQESRRAGNQVNCSTTSPNSIDADG</sequence>
<feature type="chain" id="PRO_0000232579" description="Leucine-rich repeat-containing protein 39">
    <location>
        <begin position="1"/>
        <end position="334"/>
    </location>
</feature>
<feature type="repeat" description="LRR 1">
    <location>
        <begin position="84"/>
        <end position="105"/>
    </location>
</feature>
<feature type="repeat" description="LRR 2">
    <location>
        <begin position="107"/>
        <end position="128"/>
    </location>
</feature>
<feature type="repeat" description="LRR 3">
    <location>
        <begin position="130"/>
        <end position="151"/>
    </location>
</feature>
<feature type="repeat" description="LRR 4">
    <location>
        <begin position="153"/>
        <end position="176"/>
    </location>
</feature>
<feature type="repeat" description="LRR 5">
    <location>
        <begin position="177"/>
        <end position="198"/>
    </location>
</feature>
<feature type="repeat" description="LRR 6">
    <location>
        <begin position="200"/>
        <end position="221"/>
    </location>
</feature>
<feature type="repeat" description="LRR 7">
    <location>
        <begin position="223"/>
        <end position="244"/>
    </location>
</feature>
<feature type="repeat" description="LRR 8">
    <location>
        <begin position="246"/>
        <end position="267"/>
    </location>
</feature>
<feature type="repeat" description="LRR 9">
    <location>
        <begin position="269"/>
        <end position="290"/>
    </location>
</feature>
<feature type="coiled-coil region" evidence="3">
    <location>
        <begin position="10"/>
        <end position="47"/>
    </location>
</feature>
<reference key="1">
    <citation type="submission" date="2005-08" db="EMBL/GenBank/DDBJ databases">
        <authorList>
            <consortium name="NIH - Mammalian Gene Collection (MGC) project"/>
        </authorList>
    </citation>
    <scope>NUCLEOTIDE SEQUENCE [LARGE SCALE MRNA]</scope>
    <source>
        <strain>Hereford</strain>
        <tissue>Rumen</tissue>
    </source>
</reference>
<keyword id="KW-0175">Coiled coil</keyword>
<keyword id="KW-0963">Cytoplasm</keyword>
<keyword id="KW-0433">Leucine-rich repeat</keyword>
<keyword id="KW-0514">Muscle protein</keyword>
<keyword id="KW-1185">Reference proteome</keyword>
<keyword id="KW-0677">Repeat</keyword>
<comment type="function">
    <text evidence="1">Component of the sarcomeric M-band which plays a role in myocyte response to biomechanical stress. May regulate expression of other M-band proteins via an SRF-dependent pathway. Important for normal contractile function in heart.</text>
</comment>
<comment type="subunit">
    <text evidence="2">Interacts with MYH7 (via C-terminus).</text>
</comment>
<comment type="subcellular location">
    <subcellularLocation>
        <location evidence="1">Cytoplasm</location>
        <location evidence="1">Myofibril</location>
        <location evidence="1">Sarcomere</location>
        <location evidence="1">M line</location>
    </subcellularLocation>
</comment>
<protein>
    <recommendedName>
        <fullName evidence="4">Leucine-rich repeat-containing protein 39</fullName>
    </recommendedName>
    <alternativeName>
        <fullName evidence="2">Myosin-interacting M-band-associated stress-responsive protein</fullName>
        <shortName evidence="2">Myomasp</shortName>
    </alternativeName>
</protein>
<gene>
    <name evidence="2" type="primary">LRRC39</name>
</gene>
<organism>
    <name type="scientific">Bos taurus</name>
    <name type="common">Bovine</name>
    <dbReference type="NCBI Taxonomy" id="9913"/>
    <lineage>
        <taxon>Eukaryota</taxon>
        <taxon>Metazoa</taxon>
        <taxon>Chordata</taxon>
        <taxon>Craniata</taxon>
        <taxon>Vertebrata</taxon>
        <taxon>Euteleostomi</taxon>
        <taxon>Mammalia</taxon>
        <taxon>Eutheria</taxon>
        <taxon>Laurasiatheria</taxon>
        <taxon>Artiodactyla</taxon>
        <taxon>Ruminantia</taxon>
        <taxon>Pecora</taxon>
        <taxon>Bovidae</taxon>
        <taxon>Bovinae</taxon>
        <taxon>Bos</taxon>
    </lineage>
</organism>
<name>LRC39_BOVIN</name>
<dbReference type="EMBL" id="BC102917">
    <property type="protein sequence ID" value="AAI02918.1"/>
    <property type="molecule type" value="mRNA"/>
</dbReference>
<dbReference type="RefSeq" id="NP_001069893.1">
    <property type="nucleotide sequence ID" value="NM_001076425.1"/>
</dbReference>
<dbReference type="SMR" id="Q3ZC49"/>
<dbReference type="FunCoup" id="Q3ZC49">
    <property type="interactions" value="106"/>
</dbReference>
<dbReference type="STRING" id="9913.ENSBTAP00000057900"/>
<dbReference type="PaxDb" id="9913-ENSBTAP00000048641"/>
<dbReference type="Ensembl" id="ENSBTAT00000053822.4">
    <property type="protein sequence ID" value="ENSBTAP00000048641.2"/>
    <property type="gene ID" value="ENSBTAG00000015786.7"/>
</dbReference>
<dbReference type="GeneID" id="616488"/>
<dbReference type="KEGG" id="bta:616488"/>
<dbReference type="CTD" id="127495"/>
<dbReference type="VEuPathDB" id="HostDB:ENSBTAG00000015786"/>
<dbReference type="VGNC" id="VGNC:55250">
    <property type="gene designation" value="LRRC39"/>
</dbReference>
<dbReference type="eggNOG" id="KOG0619">
    <property type="taxonomic scope" value="Eukaryota"/>
</dbReference>
<dbReference type="GeneTree" id="ENSGT00940000158998"/>
<dbReference type="HOGENOM" id="CLU_000288_18_8_1"/>
<dbReference type="InParanoid" id="Q3ZC49"/>
<dbReference type="OMA" id="DMPALEW"/>
<dbReference type="OrthoDB" id="442066at2759"/>
<dbReference type="TreeFam" id="TF333627"/>
<dbReference type="Proteomes" id="UP000009136">
    <property type="component" value="Chromosome 3"/>
</dbReference>
<dbReference type="Bgee" id="ENSBTAG00000015786">
    <property type="expression patterns" value="Expressed in cardiac ventricle and 39 other cell types or tissues"/>
</dbReference>
<dbReference type="GO" id="GO:0031430">
    <property type="term" value="C:M band"/>
    <property type="evidence" value="ECO:0007669"/>
    <property type="project" value="UniProtKB-SubCell"/>
</dbReference>
<dbReference type="GO" id="GO:0035556">
    <property type="term" value="P:intracellular signal transduction"/>
    <property type="evidence" value="ECO:0000318"/>
    <property type="project" value="GO_Central"/>
</dbReference>
<dbReference type="FunFam" id="3.80.10.10:FF:000248">
    <property type="entry name" value="Leucine rich repeat containing 39"/>
    <property type="match status" value="1"/>
</dbReference>
<dbReference type="FunFam" id="3.80.10.10:FF:000249">
    <property type="entry name" value="Leucine rich repeat containing 39"/>
    <property type="match status" value="1"/>
</dbReference>
<dbReference type="Gene3D" id="3.80.10.10">
    <property type="entry name" value="Ribonuclease Inhibitor"/>
    <property type="match status" value="2"/>
</dbReference>
<dbReference type="InterPro" id="IPR001611">
    <property type="entry name" value="Leu-rich_rpt"/>
</dbReference>
<dbReference type="InterPro" id="IPR003591">
    <property type="entry name" value="Leu-rich_rpt_typical-subtyp"/>
</dbReference>
<dbReference type="InterPro" id="IPR032675">
    <property type="entry name" value="LRR_dom_sf"/>
</dbReference>
<dbReference type="InterPro" id="IPR050216">
    <property type="entry name" value="LRR_domain-containing"/>
</dbReference>
<dbReference type="InterPro" id="IPR055414">
    <property type="entry name" value="LRR_R13L4/SHOC2-like"/>
</dbReference>
<dbReference type="PANTHER" id="PTHR48051">
    <property type="match status" value="1"/>
</dbReference>
<dbReference type="PANTHER" id="PTHR48051:SF2">
    <property type="entry name" value="LEUCINE RICH REPEAT CONTAINING 39"/>
    <property type="match status" value="1"/>
</dbReference>
<dbReference type="Pfam" id="PF23598">
    <property type="entry name" value="LRR_14"/>
    <property type="match status" value="1"/>
</dbReference>
<dbReference type="Pfam" id="PF13855">
    <property type="entry name" value="LRR_8"/>
    <property type="match status" value="1"/>
</dbReference>
<dbReference type="SMART" id="SM00369">
    <property type="entry name" value="LRR_TYP"/>
    <property type="match status" value="6"/>
</dbReference>
<dbReference type="SUPFAM" id="SSF52058">
    <property type="entry name" value="L domain-like"/>
    <property type="match status" value="1"/>
</dbReference>
<dbReference type="PROSITE" id="PS51450">
    <property type="entry name" value="LRR"/>
    <property type="match status" value="7"/>
</dbReference>